<feature type="chain" id="PRO_0000223164" description="UPF0329 protein ECU06_0090">
    <location>
        <begin position="1"/>
        <end position="606"/>
    </location>
</feature>
<feature type="region of interest" description="Disordered" evidence="1">
    <location>
        <begin position="317"/>
        <end position="401"/>
    </location>
</feature>
<feature type="compositionally biased region" description="Basic and acidic residues" evidence="1">
    <location>
        <begin position="328"/>
        <end position="353"/>
    </location>
</feature>
<feature type="compositionally biased region" description="Basic residues" evidence="1">
    <location>
        <begin position="354"/>
        <end position="367"/>
    </location>
</feature>
<feature type="compositionally biased region" description="Basic and acidic residues" evidence="1">
    <location>
        <begin position="381"/>
        <end position="401"/>
    </location>
</feature>
<proteinExistence type="inferred from homology"/>
<name>Y609_ENCCU</name>
<protein>
    <recommendedName>
        <fullName>UPF0329 protein ECU06_0090</fullName>
    </recommendedName>
</protein>
<organism>
    <name type="scientific">Encephalitozoon cuniculi (strain GB-M1)</name>
    <name type="common">Microsporidian parasite</name>
    <dbReference type="NCBI Taxonomy" id="284813"/>
    <lineage>
        <taxon>Eukaryota</taxon>
        <taxon>Fungi</taxon>
        <taxon>Fungi incertae sedis</taxon>
        <taxon>Microsporidia</taxon>
        <taxon>Unikaryonidae</taxon>
        <taxon>Encephalitozoon</taxon>
    </lineage>
</organism>
<reference key="1">
    <citation type="journal article" date="2001" name="Nature">
        <title>Genome sequence and gene compaction of the eukaryote parasite Encephalitozoon cuniculi.</title>
        <authorList>
            <person name="Katinka M.D."/>
            <person name="Duprat S."/>
            <person name="Cornillot E."/>
            <person name="Metenier G."/>
            <person name="Thomarat F."/>
            <person name="Prensier G."/>
            <person name="Barbe V."/>
            <person name="Peyretaillade E."/>
            <person name="Brottier P."/>
            <person name="Wincker P."/>
            <person name="Delbac F."/>
            <person name="El Alaoui H."/>
            <person name="Peyret P."/>
            <person name="Saurin W."/>
            <person name="Gouy M."/>
            <person name="Weissenbach J."/>
            <person name="Vivares C.P."/>
        </authorList>
    </citation>
    <scope>NUCLEOTIDE SEQUENCE [LARGE SCALE GENOMIC DNA]</scope>
    <source>
        <strain>GB-M1</strain>
    </source>
</reference>
<dbReference type="EMBL" id="AL590446">
    <property type="protein sequence ID" value="CAD25369.1"/>
    <property type="molecule type" value="Genomic_DNA"/>
</dbReference>
<dbReference type="RefSeq" id="NP_585765.1">
    <property type="nucleotide sequence ID" value="NM_001041387.1"/>
</dbReference>
<dbReference type="SMR" id="Q8SVF3"/>
<dbReference type="STRING" id="284813.Q8SVF3"/>
<dbReference type="GeneID" id="859188"/>
<dbReference type="KEGG" id="ecu:ECU06_0090"/>
<dbReference type="VEuPathDB" id="MicrosporidiaDB:ECU06_0090"/>
<dbReference type="HOGENOM" id="CLU_035434_0_0_1"/>
<dbReference type="InParanoid" id="Q8SVF3"/>
<dbReference type="OrthoDB" id="2200041at2759"/>
<dbReference type="Proteomes" id="UP000000819">
    <property type="component" value="Chromosome VI"/>
</dbReference>
<dbReference type="InterPro" id="IPR022115">
    <property type="entry name" value="DUF3654"/>
</dbReference>
<dbReference type="InterPro" id="IPR011667">
    <property type="entry name" value="UPF0329"/>
</dbReference>
<dbReference type="Pfam" id="PF07753">
    <property type="entry name" value="DUF1609"/>
    <property type="match status" value="1"/>
</dbReference>
<dbReference type="Pfam" id="PF12376">
    <property type="entry name" value="DUF3654"/>
    <property type="match status" value="1"/>
</dbReference>
<evidence type="ECO:0000256" key="1">
    <source>
        <dbReference type="SAM" id="MobiDB-lite"/>
    </source>
</evidence>
<evidence type="ECO:0000305" key="2"/>
<sequence>MWLICMAALFDMLYCSEVEESMERIFEMLHGACGLETEEMRGVLKRMSDFRTYVLFPLILHDDKLVVSPDMGYKDIEKEERIYVEKIIKKLPSLVWQSMVFLYIPEHDNWILGLMNTVFDTSSSRFSDSVGIYKKSRGRSEMRLVDLMMGMFRNNVSMMEKFGRGLAHKAEVKMKEIPNEISKEEREKQKEVLDKIREYGKSLGTREKQEQILKAQEIVFDTCIYLWRREEDRISFVLKVYLRSLQCKMLGLNKGALADDVNQEVSLLHSISHEILINTHNEYGIEVTAELIKRLFLEYMNIDEEYVSNVVEDVKKKKEEERREEEEEKKRKEEVVQRNVEELLRGEEEEKKGAKAKRKSKKKKKGSKKPEEKESEVEEVSENREAQEMEDSREACSKERNKEQKNESGRCYYKLHKRTLLWREEPEKIKKKWDSGTEERWKGKSIGEIREQKELHDISEISQLLKSQDANNFFICTGEYMKNGIKRWKMVAIAVLETRDWKKLGVVEVGLFKDKDEQNVIFHLMFRPTDLGRAGAVVRSALAKVDNMEKVDDTDDSLDISGFTYPKNTRSEVVRGLNEFRVVWRNPKNTAEVIRSLTVMSRPGGN</sequence>
<comment type="similarity">
    <text evidence="2">Belongs to the UPF0329 family.</text>
</comment>
<accession>Q8SVF3</accession>
<gene>
    <name type="ordered locus">ECU06_0090</name>
</gene>
<keyword id="KW-1185">Reference proteome</keyword>